<sequence>MRHLLSTEGLDAATATAVLDTAGTLKQTLLGREVRKLPTLRGRTVVTMFYENSTRTRVSFEVAGKWMSADVINVSAGASSVGKGESLRDTALTLSAAGADCVIVRHPASGAAHRLAGWLEATGTQVVNAGDGMHEHPTQALLDAATLRERLGELAGRRVAIVGDLLHSRVARSNVHLLRTLGAQVVLVAPPTLVPAGVEHWGAEVRHELDPELPGLDAVMLLRVQAERMHGGFFPSAREYSIAYGMNEARLARLPEHAVVLHPGPMLRGMEIAPAVADSPRAAITEQVRNGVHVRMAVLYHLLAGEEIAA</sequence>
<organism>
    <name type="scientific">Saccharopolyspora erythraea (strain ATCC 11635 / DSM 40517 / JCM 4748 / NBRC 13426 / NCIMB 8594 / NRRL 2338)</name>
    <dbReference type="NCBI Taxonomy" id="405948"/>
    <lineage>
        <taxon>Bacteria</taxon>
        <taxon>Bacillati</taxon>
        <taxon>Actinomycetota</taxon>
        <taxon>Actinomycetes</taxon>
        <taxon>Pseudonocardiales</taxon>
        <taxon>Pseudonocardiaceae</taxon>
        <taxon>Saccharopolyspora</taxon>
    </lineage>
</organism>
<keyword id="KW-0665">Pyrimidine biosynthesis</keyword>
<keyword id="KW-1185">Reference proteome</keyword>
<keyword id="KW-0808">Transferase</keyword>
<comment type="function">
    <text evidence="1">Catalyzes the condensation of carbamoyl phosphate and aspartate to form carbamoyl aspartate and inorganic phosphate, the committed step in the de novo pyrimidine nucleotide biosynthesis pathway.</text>
</comment>
<comment type="catalytic activity">
    <reaction evidence="1">
        <text>carbamoyl phosphate + L-aspartate = N-carbamoyl-L-aspartate + phosphate + H(+)</text>
        <dbReference type="Rhea" id="RHEA:20013"/>
        <dbReference type="ChEBI" id="CHEBI:15378"/>
        <dbReference type="ChEBI" id="CHEBI:29991"/>
        <dbReference type="ChEBI" id="CHEBI:32814"/>
        <dbReference type="ChEBI" id="CHEBI:43474"/>
        <dbReference type="ChEBI" id="CHEBI:58228"/>
        <dbReference type="EC" id="2.1.3.2"/>
    </reaction>
</comment>
<comment type="pathway">
    <text evidence="1">Pyrimidine metabolism; UMP biosynthesis via de novo pathway; (S)-dihydroorotate from bicarbonate: step 2/3.</text>
</comment>
<comment type="subunit">
    <text evidence="1">Heterododecamer (2C3:3R2) of six catalytic PyrB chains organized as two trimers (C3), and six regulatory PyrI chains organized as three dimers (R2).</text>
</comment>
<comment type="similarity">
    <text evidence="1">Belongs to the aspartate/ornithine carbamoyltransferase superfamily. ATCase family.</text>
</comment>
<accession>A4FBG1</accession>
<evidence type="ECO:0000255" key="1">
    <source>
        <dbReference type="HAMAP-Rule" id="MF_00001"/>
    </source>
</evidence>
<reference key="1">
    <citation type="journal article" date="2007" name="Nat. Biotechnol.">
        <title>Complete genome sequence of the erythromycin-producing bacterium Saccharopolyspora erythraea NRRL23338.</title>
        <authorList>
            <person name="Oliynyk M."/>
            <person name="Samborskyy M."/>
            <person name="Lester J.B."/>
            <person name="Mironenko T."/>
            <person name="Scott N."/>
            <person name="Dickens S."/>
            <person name="Haydock S.F."/>
            <person name="Leadlay P.F."/>
        </authorList>
    </citation>
    <scope>NUCLEOTIDE SEQUENCE [LARGE SCALE GENOMIC DNA]</scope>
    <source>
        <strain>ATCC 11635 / DSM 40517 / JCM 4748 / NBRC 13426 / NCIMB 8594 / NRRL 2338</strain>
    </source>
</reference>
<name>PYRB_SACEN</name>
<proteinExistence type="inferred from homology"/>
<gene>
    <name evidence="1" type="primary">pyrB</name>
    <name type="ordered locus">SACE_2079</name>
</gene>
<feature type="chain" id="PRO_0000301616" description="Aspartate carbamoyltransferase catalytic subunit">
    <location>
        <begin position="1"/>
        <end position="310"/>
    </location>
</feature>
<feature type="binding site" evidence="1">
    <location>
        <position position="55"/>
    </location>
    <ligand>
        <name>carbamoyl phosphate</name>
        <dbReference type="ChEBI" id="CHEBI:58228"/>
    </ligand>
</feature>
<feature type="binding site" evidence="1">
    <location>
        <position position="56"/>
    </location>
    <ligand>
        <name>carbamoyl phosphate</name>
        <dbReference type="ChEBI" id="CHEBI:58228"/>
    </ligand>
</feature>
<feature type="binding site" evidence="1">
    <location>
        <position position="83"/>
    </location>
    <ligand>
        <name>L-aspartate</name>
        <dbReference type="ChEBI" id="CHEBI:29991"/>
    </ligand>
</feature>
<feature type="binding site" evidence="1">
    <location>
        <position position="105"/>
    </location>
    <ligand>
        <name>carbamoyl phosphate</name>
        <dbReference type="ChEBI" id="CHEBI:58228"/>
    </ligand>
</feature>
<feature type="binding site" evidence="1">
    <location>
        <position position="136"/>
    </location>
    <ligand>
        <name>carbamoyl phosphate</name>
        <dbReference type="ChEBI" id="CHEBI:58228"/>
    </ligand>
</feature>
<feature type="binding site" evidence="1">
    <location>
        <position position="139"/>
    </location>
    <ligand>
        <name>carbamoyl phosphate</name>
        <dbReference type="ChEBI" id="CHEBI:58228"/>
    </ligand>
</feature>
<feature type="binding site" evidence="1">
    <location>
        <position position="169"/>
    </location>
    <ligand>
        <name>L-aspartate</name>
        <dbReference type="ChEBI" id="CHEBI:29991"/>
    </ligand>
</feature>
<feature type="binding site" evidence="1">
    <location>
        <position position="223"/>
    </location>
    <ligand>
        <name>L-aspartate</name>
        <dbReference type="ChEBI" id="CHEBI:29991"/>
    </ligand>
</feature>
<feature type="binding site" evidence="1">
    <location>
        <position position="264"/>
    </location>
    <ligand>
        <name>carbamoyl phosphate</name>
        <dbReference type="ChEBI" id="CHEBI:58228"/>
    </ligand>
</feature>
<feature type="binding site" evidence="1">
    <location>
        <position position="265"/>
    </location>
    <ligand>
        <name>carbamoyl phosphate</name>
        <dbReference type="ChEBI" id="CHEBI:58228"/>
    </ligand>
</feature>
<dbReference type="EC" id="2.1.3.2" evidence="1"/>
<dbReference type="EMBL" id="AM420293">
    <property type="protein sequence ID" value="CAM01386.1"/>
    <property type="molecule type" value="Genomic_DNA"/>
</dbReference>
<dbReference type="RefSeq" id="WP_009943041.1">
    <property type="nucleotide sequence ID" value="NC_009142.1"/>
</dbReference>
<dbReference type="SMR" id="A4FBG1"/>
<dbReference type="STRING" id="405948.SACE_2079"/>
<dbReference type="KEGG" id="sen:SACE_2079"/>
<dbReference type="eggNOG" id="COG0540">
    <property type="taxonomic scope" value="Bacteria"/>
</dbReference>
<dbReference type="HOGENOM" id="CLU_043846_2_0_11"/>
<dbReference type="OrthoDB" id="9774690at2"/>
<dbReference type="UniPathway" id="UPA00070">
    <property type="reaction ID" value="UER00116"/>
</dbReference>
<dbReference type="Proteomes" id="UP000006728">
    <property type="component" value="Chromosome"/>
</dbReference>
<dbReference type="GO" id="GO:0005829">
    <property type="term" value="C:cytosol"/>
    <property type="evidence" value="ECO:0007669"/>
    <property type="project" value="TreeGrafter"/>
</dbReference>
<dbReference type="GO" id="GO:0016597">
    <property type="term" value="F:amino acid binding"/>
    <property type="evidence" value="ECO:0007669"/>
    <property type="project" value="InterPro"/>
</dbReference>
<dbReference type="GO" id="GO:0004070">
    <property type="term" value="F:aspartate carbamoyltransferase activity"/>
    <property type="evidence" value="ECO:0007669"/>
    <property type="project" value="UniProtKB-UniRule"/>
</dbReference>
<dbReference type="GO" id="GO:0006207">
    <property type="term" value="P:'de novo' pyrimidine nucleobase biosynthetic process"/>
    <property type="evidence" value="ECO:0007669"/>
    <property type="project" value="InterPro"/>
</dbReference>
<dbReference type="GO" id="GO:0044205">
    <property type="term" value="P:'de novo' UMP biosynthetic process"/>
    <property type="evidence" value="ECO:0007669"/>
    <property type="project" value="UniProtKB-UniRule"/>
</dbReference>
<dbReference type="GO" id="GO:0006520">
    <property type="term" value="P:amino acid metabolic process"/>
    <property type="evidence" value="ECO:0007669"/>
    <property type="project" value="InterPro"/>
</dbReference>
<dbReference type="FunFam" id="3.40.50.1370:FF:000007">
    <property type="entry name" value="Aspartate carbamoyltransferase"/>
    <property type="match status" value="1"/>
</dbReference>
<dbReference type="Gene3D" id="3.40.50.1370">
    <property type="entry name" value="Aspartate/ornithine carbamoyltransferase"/>
    <property type="match status" value="2"/>
</dbReference>
<dbReference type="HAMAP" id="MF_00001">
    <property type="entry name" value="Asp_carb_tr"/>
    <property type="match status" value="1"/>
</dbReference>
<dbReference type="InterPro" id="IPR006132">
    <property type="entry name" value="Asp/Orn_carbamoyltranf_P-bd"/>
</dbReference>
<dbReference type="InterPro" id="IPR006130">
    <property type="entry name" value="Asp/Orn_carbamoylTrfase"/>
</dbReference>
<dbReference type="InterPro" id="IPR036901">
    <property type="entry name" value="Asp/Orn_carbamoylTrfase_sf"/>
</dbReference>
<dbReference type="InterPro" id="IPR002082">
    <property type="entry name" value="Asp_carbamoyltransf"/>
</dbReference>
<dbReference type="InterPro" id="IPR006131">
    <property type="entry name" value="Asp_carbamoyltransf_Asp/Orn-bd"/>
</dbReference>
<dbReference type="NCBIfam" id="TIGR00670">
    <property type="entry name" value="asp_carb_tr"/>
    <property type="match status" value="1"/>
</dbReference>
<dbReference type="NCBIfam" id="NF002032">
    <property type="entry name" value="PRK00856.1"/>
    <property type="match status" value="1"/>
</dbReference>
<dbReference type="PANTHER" id="PTHR45753:SF6">
    <property type="entry name" value="ASPARTATE CARBAMOYLTRANSFERASE"/>
    <property type="match status" value="1"/>
</dbReference>
<dbReference type="PANTHER" id="PTHR45753">
    <property type="entry name" value="ORNITHINE CARBAMOYLTRANSFERASE, MITOCHONDRIAL"/>
    <property type="match status" value="1"/>
</dbReference>
<dbReference type="Pfam" id="PF00185">
    <property type="entry name" value="OTCace"/>
    <property type="match status" value="1"/>
</dbReference>
<dbReference type="Pfam" id="PF02729">
    <property type="entry name" value="OTCace_N"/>
    <property type="match status" value="1"/>
</dbReference>
<dbReference type="PRINTS" id="PR00100">
    <property type="entry name" value="AOTCASE"/>
</dbReference>
<dbReference type="PRINTS" id="PR00101">
    <property type="entry name" value="ATCASE"/>
</dbReference>
<dbReference type="SUPFAM" id="SSF53671">
    <property type="entry name" value="Aspartate/ornithine carbamoyltransferase"/>
    <property type="match status" value="1"/>
</dbReference>
<dbReference type="PROSITE" id="PS00097">
    <property type="entry name" value="CARBAMOYLTRANSFERASE"/>
    <property type="match status" value="1"/>
</dbReference>
<protein>
    <recommendedName>
        <fullName evidence="1">Aspartate carbamoyltransferase catalytic subunit</fullName>
        <ecNumber evidence="1">2.1.3.2</ecNumber>
    </recommendedName>
    <alternativeName>
        <fullName evidence="1">Aspartate transcarbamylase</fullName>
        <shortName evidence="1">ATCase</shortName>
    </alternativeName>
</protein>